<feature type="chain" id="PRO_1000147981" description="Probable glycine dehydrogenase (decarboxylating) subunit 1">
    <location>
        <begin position="1"/>
        <end position="435"/>
    </location>
</feature>
<accession>B5Y9D4</accession>
<evidence type="ECO:0000255" key="1">
    <source>
        <dbReference type="HAMAP-Rule" id="MF_00712"/>
    </source>
</evidence>
<reference key="1">
    <citation type="submission" date="2008-08" db="EMBL/GenBank/DDBJ databases">
        <title>The complete genome sequence of Coprothermobacter proteolyticus strain ATCC 5245 / DSM 5265 / BT.</title>
        <authorList>
            <person name="Dodson R.J."/>
            <person name="Durkin A.S."/>
            <person name="Wu M."/>
            <person name="Eisen J."/>
            <person name="Sutton G."/>
        </authorList>
    </citation>
    <scope>NUCLEOTIDE SEQUENCE [LARGE SCALE GENOMIC DNA]</scope>
    <source>
        <strain>ATCC 35245 / DSM 5265 / OCM 4 / BT</strain>
    </source>
</reference>
<comment type="function">
    <text evidence="1">The glycine cleavage system catalyzes the degradation of glycine. The P protein binds the alpha-amino group of glycine through its pyridoxal phosphate cofactor; CO(2) is released and the remaining methylamine moiety is then transferred to the lipoamide cofactor of the H protein.</text>
</comment>
<comment type="catalytic activity">
    <reaction evidence="1">
        <text>N(6)-[(R)-lipoyl]-L-lysyl-[glycine-cleavage complex H protein] + glycine + H(+) = N(6)-[(R)-S(8)-aminomethyldihydrolipoyl]-L-lysyl-[glycine-cleavage complex H protein] + CO2</text>
        <dbReference type="Rhea" id="RHEA:24304"/>
        <dbReference type="Rhea" id="RHEA-COMP:10494"/>
        <dbReference type="Rhea" id="RHEA-COMP:10495"/>
        <dbReference type="ChEBI" id="CHEBI:15378"/>
        <dbReference type="ChEBI" id="CHEBI:16526"/>
        <dbReference type="ChEBI" id="CHEBI:57305"/>
        <dbReference type="ChEBI" id="CHEBI:83099"/>
        <dbReference type="ChEBI" id="CHEBI:83143"/>
        <dbReference type="EC" id="1.4.4.2"/>
    </reaction>
</comment>
<comment type="subunit">
    <text evidence="1">The glycine cleavage system is composed of four proteins: P, T, L and H. In this organism, the P 'protein' is a heterodimer of two subunits.</text>
</comment>
<comment type="similarity">
    <text evidence="1">Belongs to the GcvP family. N-terminal subunit subfamily.</text>
</comment>
<protein>
    <recommendedName>
        <fullName evidence="1">Probable glycine dehydrogenase (decarboxylating) subunit 1</fullName>
        <ecNumber evidence="1">1.4.4.2</ecNumber>
    </recommendedName>
    <alternativeName>
        <fullName evidence="1">Glycine cleavage system P-protein subunit 1</fullName>
    </alternativeName>
    <alternativeName>
        <fullName evidence="1">Glycine decarboxylase subunit 1</fullName>
    </alternativeName>
    <alternativeName>
        <fullName evidence="1">Glycine dehydrogenase (aminomethyl-transferring) subunit 1</fullName>
    </alternativeName>
</protein>
<sequence>MRYVPHTKEEIKAMLEAVGLRNVDELFSDIPTEALLKRHLQVEGGWDEEQLRAYFRKAASSIPDANSAVYFLGGGVYDHYVPSAVDKIIALPEFYTAYTPYQAEISQGTLQAMFEYQSLICELTGMEVANGSLYDGASAVAEAVLMAMRINGKRRVLVSECVHPDIIEVLRTYQLGQDFEILTLPQKEGVTDLSELEDLSNVSCLVMQNPNYYGFLENMNQASELIHKAGGLFVAAVDPLSLGVLKSPHEYGADVVVGEGQSLGNHMSYGGPHFGFFATKMDYIRYMPGRMAGQTVDVDGRVGYVLTLQTREQHIRREKATSNITSNHWLMALASAVYLSLMGGSLPELGQTILNRSTYLAQKLASVGYPLWQRQYFFKEFPIKARDAEAVQEALADSGYYVGPVIDEHTLLVAVTEKRTKEHMDKLIELMEGLR</sequence>
<gene>
    <name evidence="1" type="primary">gcvPA</name>
    <name type="ordered locus">COPRO5265_1070</name>
</gene>
<proteinExistence type="inferred from homology"/>
<organism>
    <name type="scientific">Coprothermobacter proteolyticus (strain ATCC 35245 / DSM 5265 / OCM 4 / BT)</name>
    <dbReference type="NCBI Taxonomy" id="309798"/>
    <lineage>
        <taxon>Bacteria</taxon>
        <taxon>Pseudomonadati</taxon>
        <taxon>Coprothermobacterota</taxon>
        <taxon>Coprothermobacteria</taxon>
        <taxon>Coprothermobacterales</taxon>
        <taxon>Coprothermobacteraceae</taxon>
        <taxon>Coprothermobacter</taxon>
    </lineage>
</organism>
<dbReference type="EC" id="1.4.4.2" evidence="1"/>
<dbReference type="EMBL" id="CP001145">
    <property type="protein sequence ID" value="ACI17103.1"/>
    <property type="molecule type" value="Genomic_DNA"/>
</dbReference>
<dbReference type="RefSeq" id="WP_012543755.1">
    <property type="nucleotide sequence ID" value="NC_011295.1"/>
</dbReference>
<dbReference type="SMR" id="B5Y9D4"/>
<dbReference type="STRING" id="309798.COPRO5265_1070"/>
<dbReference type="KEGG" id="cpo:COPRO5265_1070"/>
<dbReference type="eggNOG" id="COG0403">
    <property type="taxonomic scope" value="Bacteria"/>
</dbReference>
<dbReference type="HOGENOM" id="CLU_004620_0_2_9"/>
<dbReference type="OrthoDB" id="9771867at2"/>
<dbReference type="Proteomes" id="UP000001732">
    <property type="component" value="Chromosome"/>
</dbReference>
<dbReference type="GO" id="GO:0004375">
    <property type="term" value="F:glycine dehydrogenase (decarboxylating) activity"/>
    <property type="evidence" value="ECO:0007669"/>
    <property type="project" value="UniProtKB-EC"/>
</dbReference>
<dbReference type="GO" id="GO:0019464">
    <property type="term" value="P:glycine decarboxylation via glycine cleavage system"/>
    <property type="evidence" value="ECO:0007669"/>
    <property type="project" value="UniProtKB-UniRule"/>
</dbReference>
<dbReference type="GO" id="GO:0009116">
    <property type="term" value="P:nucleoside metabolic process"/>
    <property type="evidence" value="ECO:0007669"/>
    <property type="project" value="InterPro"/>
</dbReference>
<dbReference type="CDD" id="cd00613">
    <property type="entry name" value="GDC-P"/>
    <property type="match status" value="1"/>
</dbReference>
<dbReference type="Gene3D" id="3.90.1150.10">
    <property type="entry name" value="Aspartate Aminotransferase, domain 1"/>
    <property type="match status" value="1"/>
</dbReference>
<dbReference type="Gene3D" id="3.40.640.10">
    <property type="entry name" value="Type I PLP-dependent aspartate aminotransferase-like (Major domain)"/>
    <property type="match status" value="1"/>
</dbReference>
<dbReference type="HAMAP" id="MF_00712">
    <property type="entry name" value="GcvPA"/>
    <property type="match status" value="1"/>
</dbReference>
<dbReference type="InterPro" id="IPR023010">
    <property type="entry name" value="GcvPA"/>
</dbReference>
<dbReference type="InterPro" id="IPR049315">
    <property type="entry name" value="GDC-P_N"/>
</dbReference>
<dbReference type="InterPro" id="IPR020581">
    <property type="entry name" value="GDC_P"/>
</dbReference>
<dbReference type="InterPro" id="IPR015424">
    <property type="entry name" value="PyrdxlP-dep_Trfase"/>
</dbReference>
<dbReference type="InterPro" id="IPR015421">
    <property type="entry name" value="PyrdxlP-dep_Trfase_major"/>
</dbReference>
<dbReference type="InterPro" id="IPR015422">
    <property type="entry name" value="PyrdxlP-dep_Trfase_small"/>
</dbReference>
<dbReference type="NCBIfam" id="NF001696">
    <property type="entry name" value="PRK00451.1"/>
    <property type="match status" value="1"/>
</dbReference>
<dbReference type="PANTHER" id="PTHR42806">
    <property type="entry name" value="GLYCINE CLEAVAGE SYSTEM P-PROTEIN"/>
    <property type="match status" value="1"/>
</dbReference>
<dbReference type="PANTHER" id="PTHR42806:SF1">
    <property type="entry name" value="GLYCINE DEHYDROGENASE (DECARBOXYLATING)"/>
    <property type="match status" value="1"/>
</dbReference>
<dbReference type="Pfam" id="PF02347">
    <property type="entry name" value="GDC-P"/>
    <property type="match status" value="1"/>
</dbReference>
<dbReference type="PIRSF" id="PIRSF006815">
    <property type="entry name" value="GcvPA"/>
    <property type="match status" value="1"/>
</dbReference>
<dbReference type="SUPFAM" id="SSF53383">
    <property type="entry name" value="PLP-dependent transferases"/>
    <property type="match status" value="1"/>
</dbReference>
<keyword id="KW-0560">Oxidoreductase</keyword>
<keyword id="KW-1185">Reference proteome</keyword>
<name>GCSPA_COPPD</name>